<proteinExistence type="evidence at protein level"/>
<keyword id="KW-1015">Disulfide bond</keyword>
<keyword id="KW-0325">Glycoprotein</keyword>
<keyword id="KW-0328">Glycosyltransferase</keyword>
<keyword id="KW-0333">Golgi apparatus</keyword>
<keyword id="KW-0472">Membrane</keyword>
<keyword id="KW-0479">Metal-binding</keyword>
<keyword id="KW-1185">Reference proteome</keyword>
<keyword id="KW-0735">Signal-anchor</keyword>
<keyword id="KW-0808">Transferase</keyword>
<keyword id="KW-0812">Transmembrane</keyword>
<keyword id="KW-1133">Transmembrane helix</keyword>
<organism>
    <name type="scientific">Mus musculus</name>
    <name type="common">Mouse</name>
    <dbReference type="NCBI Taxonomy" id="10090"/>
    <lineage>
        <taxon>Eukaryota</taxon>
        <taxon>Metazoa</taxon>
        <taxon>Chordata</taxon>
        <taxon>Craniata</taxon>
        <taxon>Vertebrata</taxon>
        <taxon>Euteleostomi</taxon>
        <taxon>Mammalia</taxon>
        <taxon>Eutheria</taxon>
        <taxon>Euarchontoglires</taxon>
        <taxon>Glires</taxon>
        <taxon>Rodentia</taxon>
        <taxon>Myomorpha</taxon>
        <taxon>Muroidea</taxon>
        <taxon>Muridae</taxon>
        <taxon>Murinae</taxon>
        <taxon>Mus</taxon>
        <taxon>Mus</taxon>
    </lineage>
</organism>
<dbReference type="EC" id="2.4.2.26" evidence="6"/>
<dbReference type="EMBL" id="AJ539164">
    <property type="protein sequence ID" value="CAD62249.1"/>
    <property type="molecule type" value="mRNA"/>
</dbReference>
<dbReference type="EMBL" id="AJ291750">
    <property type="protein sequence ID" value="CAC18566.1"/>
    <property type="molecule type" value="mRNA"/>
</dbReference>
<dbReference type="CCDS" id="CCDS40101.1"/>
<dbReference type="RefSeq" id="NP_783576.2">
    <property type="nucleotide sequence ID" value="NM_175645.3"/>
</dbReference>
<dbReference type="SMR" id="Q811B1"/>
<dbReference type="BioGRID" id="231443">
    <property type="interactions" value="7"/>
</dbReference>
<dbReference type="FunCoup" id="Q811B1">
    <property type="interactions" value="272"/>
</dbReference>
<dbReference type="STRING" id="10090.ENSMUSP00000032892"/>
<dbReference type="CAZy" id="GT14">
    <property type="family name" value="Glycosyltransferase Family 14"/>
</dbReference>
<dbReference type="GlyCosmos" id="Q811B1">
    <property type="glycosylation" value="3 sites, No reported glycans"/>
</dbReference>
<dbReference type="GlyGen" id="Q811B1">
    <property type="glycosylation" value="5 sites, 1 O-linked glycan (1 site)"/>
</dbReference>
<dbReference type="iPTMnet" id="Q811B1"/>
<dbReference type="PhosphoSitePlus" id="Q811B1"/>
<dbReference type="SwissPalm" id="Q811B1"/>
<dbReference type="PaxDb" id="10090-ENSMUSP00000032892"/>
<dbReference type="ProteomicsDB" id="299802"/>
<dbReference type="DNASU" id="233781"/>
<dbReference type="GeneID" id="233781"/>
<dbReference type="KEGG" id="mmu:233781"/>
<dbReference type="AGR" id="MGI:2451073"/>
<dbReference type="CTD" id="64131"/>
<dbReference type="MGI" id="MGI:2451073">
    <property type="gene designation" value="Xylt1"/>
</dbReference>
<dbReference type="eggNOG" id="KOG0799">
    <property type="taxonomic scope" value="Eukaryota"/>
</dbReference>
<dbReference type="InParanoid" id="Q811B1"/>
<dbReference type="OrthoDB" id="2019572at2759"/>
<dbReference type="PhylomeDB" id="Q811B1"/>
<dbReference type="Reactome" id="R-MMU-1971475">
    <property type="pathway name" value="A tetrasaccharide linker sequence is required for GAG synthesis"/>
</dbReference>
<dbReference type="UniPathway" id="UPA00755"/>
<dbReference type="UniPathway" id="UPA00756"/>
<dbReference type="BioGRID-ORCS" id="233781">
    <property type="hits" value="2 hits in 77 CRISPR screens"/>
</dbReference>
<dbReference type="ChiTaRS" id="Xylt1">
    <property type="organism name" value="mouse"/>
</dbReference>
<dbReference type="PRO" id="PR:Q811B1"/>
<dbReference type="Proteomes" id="UP000000589">
    <property type="component" value="Unplaced"/>
</dbReference>
<dbReference type="RNAct" id="Q811B1">
    <property type="molecule type" value="protein"/>
</dbReference>
<dbReference type="GO" id="GO:0005615">
    <property type="term" value="C:extracellular space"/>
    <property type="evidence" value="ECO:0000250"/>
    <property type="project" value="UniProtKB"/>
</dbReference>
<dbReference type="GO" id="GO:0005794">
    <property type="term" value="C:Golgi apparatus"/>
    <property type="evidence" value="ECO:0000314"/>
    <property type="project" value="MGI"/>
</dbReference>
<dbReference type="GO" id="GO:0000137">
    <property type="term" value="C:Golgi cis cisterna"/>
    <property type="evidence" value="ECO:0000314"/>
    <property type="project" value="UniProtKB"/>
</dbReference>
<dbReference type="GO" id="GO:0000139">
    <property type="term" value="C:Golgi membrane"/>
    <property type="evidence" value="ECO:0000250"/>
    <property type="project" value="UniProtKB"/>
</dbReference>
<dbReference type="GO" id="GO:0046872">
    <property type="term" value="F:metal ion binding"/>
    <property type="evidence" value="ECO:0007669"/>
    <property type="project" value="UniProtKB-KW"/>
</dbReference>
<dbReference type="GO" id="GO:0030158">
    <property type="term" value="F:protein xylosyltransferase activity"/>
    <property type="evidence" value="ECO:0000314"/>
    <property type="project" value="UniProtKB"/>
</dbReference>
<dbReference type="GO" id="GO:0034605">
    <property type="term" value="P:cellular response to heat"/>
    <property type="evidence" value="ECO:0000314"/>
    <property type="project" value="MGI"/>
</dbReference>
<dbReference type="GO" id="GO:0050650">
    <property type="term" value="P:chondroitin sulfate proteoglycan biosynthetic process"/>
    <property type="evidence" value="ECO:0000315"/>
    <property type="project" value="UniProtKB"/>
</dbReference>
<dbReference type="GO" id="GO:0048706">
    <property type="term" value="P:embryonic skeletal system development"/>
    <property type="evidence" value="ECO:0000315"/>
    <property type="project" value="UniProtKB"/>
</dbReference>
<dbReference type="GO" id="GO:0006024">
    <property type="term" value="P:glycosaminoglycan biosynthetic process"/>
    <property type="evidence" value="ECO:0000315"/>
    <property type="project" value="MGI"/>
</dbReference>
<dbReference type="GO" id="GO:0015012">
    <property type="term" value="P:heparan sulfate proteoglycan biosynthetic process"/>
    <property type="evidence" value="ECO:0000250"/>
    <property type="project" value="UniProtKB"/>
</dbReference>
<dbReference type="GO" id="GO:0043931">
    <property type="term" value="P:ossification involved in bone maturation"/>
    <property type="evidence" value="ECO:0000315"/>
    <property type="project" value="UniProtKB"/>
</dbReference>
<dbReference type="GO" id="GO:0030166">
    <property type="term" value="P:proteoglycan biosynthetic process"/>
    <property type="evidence" value="ECO:0000250"/>
    <property type="project" value="UniProtKB"/>
</dbReference>
<dbReference type="InterPro" id="IPR003406">
    <property type="entry name" value="Glyco_trans_14"/>
</dbReference>
<dbReference type="InterPro" id="IPR043538">
    <property type="entry name" value="XYLT"/>
</dbReference>
<dbReference type="InterPro" id="IPR024448">
    <property type="entry name" value="XylT_C"/>
</dbReference>
<dbReference type="PANTHER" id="PTHR46025:SF2">
    <property type="entry name" value="XYLOSYLTRANSFERASE 1"/>
    <property type="match status" value="1"/>
</dbReference>
<dbReference type="PANTHER" id="PTHR46025">
    <property type="entry name" value="XYLOSYLTRANSFERASE OXT"/>
    <property type="match status" value="1"/>
</dbReference>
<dbReference type="Pfam" id="PF02485">
    <property type="entry name" value="Branch"/>
    <property type="match status" value="1"/>
</dbReference>
<dbReference type="Pfam" id="PF12529">
    <property type="entry name" value="Xylo_C"/>
    <property type="match status" value="1"/>
</dbReference>
<gene>
    <name type="primary">Xylt1</name>
</gene>
<comment type="function">
    <text evidence="6">Catalyzes the first step in the biosynthesis of chondroitin sulfate and dermatan sulfate proteoglycans, such as DCN. Transfers D-xylose from UDP-D-xylose to specific serine residues of the core protein. Required for normal maturation of chondrocytes during bone development, normal onset of ossification and normal embryonic and postnatal skeleton development, especially of the long bones.</text>
</comment>
<comment type="catalytic activity">
    <reaction evidence="6">
        <text>UDP-alpha-D-xylose + L-seryl-[protein] = 3-O-(beta-D-xylosyl)-L-seryl-[protein] + UDP + H(+)</text>
        <dbReference type="Rhea" id="RHEA:50192"/>
        <dbReference type="Rhea" id="RHEA-COMP:9863"/>
        <dbReference type="Rhea" id="RHEA-COMP:12567"/>
        <dbReference type="ChEBI" id="CHEBI:15378"/>
        <dbReference type="ChEBI" id="CHEBI:29999"/>
        <dbReference type="ChEBI" id="CHEBI:57632"/>
        <dbReference type="ChEBI" id="CHEBI:58223"/>
        <dbReference type="ChEBI" id="CHEBI:132085"/>
        <dbReference type="EC" id="2.4.2.26"/>
    </reaction>
</comment>
<comment type="cofactor">
    <cofactor evidence="1">
        <name>a divalent metal cation</name>
        <dbReference type="ChEBI" id="CHEBI:60240"/>
    </cofactor>
</comment>
<comment type="pathway">
    <text evidence="6">Glycan metabolism; chondroitin sulfate biosynthesis.</text>
</comment>
<comment type="pathway">
    <text evidence="1">Glycan metabolism; heparan sulfate biosynthesis.</text>
</comment>
<comment type="subunit">
    <text evidence="1">Monomer.</text>
</comment>
<comment type="subcellular location">
    <subcellularLocation>
        <location evidence="6">Golgi apparatus membrane</location>
        <topology evidence="7">Single-pass type II membrane protein</topology>
    </subcellularLocation>
</comment>
<comment type="tissue specificity">
    <text evidence="4 5">Detected in brain, spleen, kidney and testis, and at low levels in skeletal muscle.</text>
</comment>
<comment type="developmental stage">
    <text evidence="6">Detected in embryonic chondrocytes in humerus and ulna during embryonic bone development. Not detected in mature bone.</text>
</comment>
<comment type="PTM">
    <text evidence="1">Contains 7 disulfide bonds.</text>
</comment>
<comment type="PTM">
    <text evidence="1">N-glycosylated.</text>
</comment>
<comment type="similarity">
    <text evidence="7">Belongs to the glycosyltransferase 14 family. XylT subfamily.</text>
</comment>
<feature type="chain" id="PRO_0000191401" description="Xylosyltransferase 1">
    <location>
        <begin position="1"/>
        <end position="953"/>
    </location>
</feature>
<feature type="topological domain" description="Cytoplasmic" evidence="2">
    <location>
        <begin position="1"/>
        <end position="17"/>
    </location>
</feature>
<feature type="transmembrane region" description="Helical; Signal-anchor for type II membrane protein" evidence="2">
    <location>
        <begin position="18"/>
        <end position="38"/>
    </location>
</feature>
<feature type="topological domain" description="Lumenal" evidence="2">
    <location>
        <begin position="39"/>
        <end position="953"/>
    </location>
</feature>
<feature type="region of interest" description="Disordered" evidence="3">
    <location>
        <begin position="48"/>
        <end position="67"/>
    </location>
</feature>
<feature type="region of interest" description="Disordered" evidence="3">
    <location>
        <begin position="74"/>
        <end position="251"/>
    </location>
</feature>
<feature type="region of interest" description="Disordered" evidence="3">
    <location>
        <begin position="933"/>
        <end position="953"/>
    </location>
</feature>
<feature type="compositionally biased region" description="Low complexity" evidence="3">
    <location>
        <begin position="48"/>
        <end position="62"/>
    </location>
</feature>
<feature type="compositionally biased region" description="Gly residues" evidence="3">
    <location>
        <begin position="79"/>
        <end position="97"/>
    </location>
</feature>
<feature type="compositionally biased region" description="Basic and acidic residues" evidence="3">
    <location>
        <begin position="138"/>
        <end position="154"/>
    </location>
</feature>
<feature type="compositionally biased region" description="Polar residues" evidence="3">
    <location>
        <begin position="156"/>
        <end position="165"/>
    </location>
</feature>
<feature type="compositionally biased region" description="Basic and acidic residues" evidence="3">
    <location>
        <begin position="170"/>
        <end position="197"/>
    </location>
</feature>
<feature type="compositionally biased region" description="Basic and acidic residues" evidence="3">
    <location>
        <begin position="205"/>
        <end position="216"/>
    </location>
</feature>
<feature type="binding site" evidence="1">
    <location>
        <position position="327"/>
    </location>
    <ligand>
        <name>UDP-alpha-D-xylose</name>
        <dbReference type="ChEBI" id="CHEBI:57632"/>
    </ligand>
</feature>
<feature type="binding site" evidence="1">
    <location>
        <position position="355"/>
    </location>
    <ligand>
        <name>UDP-alpha-D-xylose</name>
        <dbReference type="ChEBI" id="CHEBI:57632"/>
    </ligand>
</feature>
<feature type="binding site" evidence="1">
    <location>
        <begin position="384"/>
        <end position="386"/>
    </location>
    <ligand>
        <name>UDP-alpha-D-xylose</name>
        <dbReference type="ChEBI" id="CHEBI:57632"/>
    </ligand>
</feature>
<feature type="binding site" evidence="1">
    <location>
        <begin position="488"/>
        <end position="489"/>
    </location>
    <ligand>
        <name>UDP-alpha-D-xylose</name>
        <dbReference type="ChEBI" id="CHEBI:57632"/>
    </ligand>
</feature>
<feature type="binding site" evidence="1">
    <location>
        <position position="569"/>
    </location>
    <ligand>
        <name>UDP-alpha-D-xylose</name>
        <dbReference type="ChEBI" id="CHEBI:57632"/>
    </ligand>
</feature>
<feature type="binding site" evidence="1">
    <location>
        <begin position="592"/>
        <end position="593"/>
    </location>
    <ligand>
        <name>UDP-alpha-D-xylose</name>
        <dbReference type="ChEBI" id="CHEBI:57632"/>
    </ligand>
</feature>
<feature type="glycosylation site" description="N-linked (GlcNAc...) asparagine" evidence="2">
    <location>
        <position position="219"/>
    </location>
</feature>
<feature type="glycosylation site" description="N-linked (GlcNAc...) asparagine" evidence="2">
    <location>
        <position position="415"/>
    </location>
</feature>
<feature type="glycosylation site" description="N-linked (GlcNAc...) asparagine" evidence="2">
    <location>
        <position position="771"/>
    </location>
</feature>
<feature type="disulfide bond" evidence="1">
    <location>
        <begin position="251"/>
        <end position="279"/>
    </location>
</feature>
<feature type="disulfide bond" evidence="1">
    <location>
        <begin position="295"/>
        <end position="536"/>
    </location>
</feature>
<feature type="disulfide bond" evidence="1">
    <location>
        <begin position="555"/>
        <end position="568"/>
    </location>
</feature>
<feature type="disulfide bond" evidence="1">
    <location>
        <begin position="557"/>
        <end position="566"/>
    </location>
</feature>
<feature type="disulfide bond" evidence="1">
    <location>
        <begin position="669"/>
        <end position="921"/>
    </location>
</feature>
<feature type="disulfide bond" evidence="1">
    <location>
        <begin position="914"/>
        <end position="927"/>
    </location>
</feature>
<feature type="mutagenesis site" description="In pug; strongly reduced enzyme activity leads to defects in proteoglycan synthesis, abnormal chondrocyte maturation, premature ossification and dwarfism with short limbs and a compressed ribcage, which may be the cause for the increased mortality before weaning." evidence="6">
    <original>W</original>
    <variation>R</variation>
    <location>
        <position position="932"/>
    </location>
</feature>
<feature type="sequence conflict" description="In Ref. 2; CAC18566." evidence="7" ref="2">
    <original>A</original>
    <variation>L</variation>
    <location>
        <position position="162"/>
    </location>
</feature>
<name>XYLT1_MOUSE</name>
<protein>
    <recommendedName>
        <fullName>Xylosyltransferase 1</fullName>
        <ecNumber evidence="6">2.4.2.26</ecNumber>
    </recommendedName>
    <alternativeName>
        <fullName>Peptide O-xylosyltransferase 1</fullName>
    </alternativeName>
    <alternativeName>
        <fullName>Xylosyltransferase I</fullName>
    </alternativeName>
</protein>
<sequence length="953" mass="107298">MVAAPCARRLARRSHSALLAALMVLLLHTLVVWNFSSLDSGAGEQRRAGAAAGAAEQQQPAAPRRERRDLAAHLPAARGGPGGRAGGGGARGGGPGGARAQQPASRGALASRARDPQPSPLITLETQDGYFSHRPKEKVRTDSNNENSVPKDFENVDNSNFAPRTQKQKHQPELAKKPPSRQKEHLQRKLDALDKRQGQSVLGKGPKEVLPPREKATGNSSQGKDLSRHSHARKSGGGGSPETKSDQAPKCDISGKEAISALTRAKSKHCRQEIAETYCRHKLGLLMPEKVARFCPLKGKAHKNVQWDEDAVEYMPANPVRIAFVLVVHGRAFRQFQRMSKAIYHKDHFYYIHVDKRSNYLHRQGLQFSRQYENVRVTSWKMATIWGGASFLSTYLQSMRDLLEMTDWPWDFFINLSAADYPIRTNDQLVAFLSRYRDMNFLKSHGRDNARFIRKQGLDRLFLECDTHMWRLGDRRIPEGIAVDGGSDWFLLNRKFVEYVAFSTDDLVTKMKQFYSYTLLPAESFFHTVLENSPHCDTMVDNNLRITNWNRKLGCKCQYKHIVDWCGCSPNDFKPQDFHRFQQTARPTFFARKFEAIVNQEIIGQLDSYLSGNFPAGTPGLRSYWEKLYDQSAPLRSLSDVALTMYHSFIRLGLRRAESSLHTDGENSCRYYPMGHPVSVHFYFLADRFQGFLIKHHVTNLAVSKLETLETWMMPKEVFKVASPPSDFGRLQFSEVGTDWDAKERLFRNFGGLLGPMDEPVGMQKWGKGPNVTVTVIWVDPVNVITATYDILIESTAEFTHYKPPLNLPLRPGVWTVKILHHWVPVAETKFLVAPLTFSNKQPIKPEEALKLHNGPPRSAYMEQSFQSLNPVLSLHINPAQVEQARKNAAFTGTALEAWLDSLVGGTWTAMDICTTGPTACPVMQTCSQTAWSSFSPDPKSELGAVKPDGRLR</sequence>
<reference key="1">
    <citation type="journal article" date="2005" name="Biochem. J.">
        <title>Human xylosyltransferase I: functional and biochemical characterization of cysteine residues required for enzymic activity.</title>
        <authorList>
            <person name="Mueller S."/>
            <person name="Schoettler M."/>
            <person name="Schoen S."/>
            <person name="Prante C."/>
            <person name="Brinkmann T."/>
            <person name="Kuhn J."/>
            <person name="Goetting C."/>
            <person name="Kleesiek K."/>
        </authorList>
    </citation>
    <scope>NUCLEOTIDE SEQUENCE [MRNA]</scope>
</reference>
<reference key="2">
    <citation type="journal article" date="2000" name="J. Mol. Biol.">
        <title>Molecular cloning and expression of human UDP-D-xylose:proteoglycan core protein beta-D-xylosyltransferase and its first isoform XT-II.</title>
        <authorList>
            <person name="Goetting C."/>
            <person name="Kuhn J."/>
            <person name="Zahn R."/>
            <person name="Brinkmann T."/>
            <person name="Kleesiek K."/>
        </authorList>
    </citation>
    <scope>NUCLEOTIDE SEQUENCE [MRNA] OF 162-950</scope>
</reference>
<reference key="3">
    <citation type="journal article" date="2007" name="J. Biol. Chem.">
        <title>Human xylosyltransferase II is involved in the biosynthesis of the uniform tetrasaccharide linkage region in chondroitin sulfate and heparan sulfate proteoglycans.</title>
        <authorList>
            <person name="Poenighaus C."/>
            <person name="Ambrosius M."/>
            <person name="Casanova J.C."/>
            <person name="Prante C."/>
            <person name="Kuhn J."/>
            <person name="Esko J.D."/>
            <person name="Kleesiek K."/>
            <person name="Goetting C."/>
        </authorList>
    </citation>
    <scope>TISSUE SPECIFICITY</scope>
</reference>
<reference key="4">
    <citation type="journal article" date="2007" name="Proc. Natl. Acad. Sci. U.S.A.">
        <title>Polycystic disease caused by deficiency in xylosyltransferase 2, an initiating enzyme of glycosaminoglycan biosynthesis.</title>
        <authorList>
            <person name="Condac E."/>
            <person name="Silasi-Mansat R."/>
            <person name="Kosanke S."/>
            <person name="Schoeb T."/>
            <person name="Towner R."/>
            <person name="Lupu F."/>
            <person name="Cummings R.D."/>
            <person name="Hinsdale M.E."/>
        </authorList>
    </citation>
    <scope>TISSUE SPECIFICITY</scope>
</reference>
<reference key="5">
    <citation type="journal article" date="2014" name="Dev. Biol.">
        <title>Forward genetics defines Xylt1 as a key, conserved regulator of early chondrocyte maturation and skeletal length.</title>
        <authorList>
            <person name="Mis E.K."/>
            <person name="Liem K.F. Jr."/>
            <person name="Kong Y."/>
            <person name="Schwartz N.B."/>
            <person name="Domowicz M."/>
            <person name="Weatherbee S.D."/>
        </authorList>
    </citation>
    <scope>FUNCTION</scope>
    <scope>CATALYTIC ACTIVITY</scope>
    <scope>SUBCELLULAR LOCATION</scope>
    <scope>DEVELOPMENTAL STAGE</scope>
    <scope>PATHWAY</scope>
    <scope>MUTAGENESIS OF TRP-932</scope>
</reference>
<accession>Q811B1</accession>
<accession>Q9EPL1</accession>
<evidence type="ECO:0000250" key="1">
    <source>
        <dbReference type="UniProtKB" id="Q86Y38"/>
    </source>
</evidence>
<evidence type="ECO:0000255" key="2"/>
<evidence type="ECO:0000256" key="3">
    <source>
        <dbReference type="SAM" id="MobiDB-lite"/>
    </source>
</evidence>
<evidence type="ECO:0000269" key="4">
    <source>
    </source>
</evidence>
<evidence type="ECO:0000269" key="5">
    <source>
    </source>
</evidence>
<evidence type="ECO:0000269" key="6">
    <source>
    </source>
</evidence>
<evidence type="ECO:0000305" key="7"/>